<organism>
    <name type="scientific">Streptococcus pyogenes serotype M28 (strain MGAS6180)</name>
    <dbReference type="NCBI Taxonomy" id="319701"/>
    <lineage>
        <taxon>Bacteria</taxon>
        <taxon>Bacillati</taxon>
        <taxon>Bacillota</taxon>
        <taxon>Bacilli</taxon>
        <taxon>Lactobacillales</taxon>
        <taxon>Streptococcaceae</taxon>
        <taxon>Streptococcus</taxon>
    </lineage>
</organism>
<dbReference type="EMBL" id="CP000056">
    <property type="protein sequence ID" value="AAX71160.1"/>
    <property type="molecule type" value="Genomic_DNA"/>
</dbReference>
<dbReference type="RefSeq" id="WP_002986654.1">
    <property type="nucleotide sequence ID" value="NC_007296.2"/>
</dbReference>
<dbReference type="SMR" id="Q48VU6"/>
<dbReference type="GeneID" id="83689570"/>
<dbReference type="KEGG" id="spb:M28_Spy0046"/>
<dbReference type="HOGENOM" id="CLU_036235_2_1_9"/>
<dbReference type="GO" id="GO:0015934">
    <property type="term" value="C:large ribosomal subunit"/>
    <property type="evidence" value="ECO:0007669"/>
    <property type="project" value="InterPro"/>
</dbReference>
<dbReference type="GO" id="GO:0019843">
    <property type="term" value="F:rRNA binding"/>
    <property type="evidence" value="ECO:0007669"/>
    <property type="project" value="UniProtKB-UniRule"/>
</dbReference>
<dbReference type="GO" id="GO:0003735">
    <property type="term" value="F:structural constituent of ribosome"/>
    <property type="evidence" value="ECO:0007669"/>
    <property type="project" value="InterPro"/>
</dbReference>
<dbReference type="GO" id="GO:0016740">
    <property type="term" value="F:transferase activity"/>
    <property type="evidence" value="ECO:0007669"/>
    <property type="project" value="InterPro"/>
</dbReference>
<dbReference type="GO" id="GO:0002181">
    <property type="term" value="P:cytoplasmic translation"/>
    <property type="evidence" value="ECO:0007669"/>
    <property type="project" value="TreeGrafter"/>
</dbReference>
<dbReference type="FunFam" id="2.30.30.30:FF:000001">
    <property type="entry name" value="50S ribosomal protein L2"/>
    <property type="match status" value="1"/>
</dbReference>
<dbReference type="FunFam" id="2.40.50.140:FF:000003">
    <property type="entry name" value="50S ribosomal protein L2"/>
    <property type="match status" value="1"/>
</dbReference>
<dbReference type="FunFam" id="4.10.950.10:FF:000001">
    <property type="entry name" value="50S ribosomal protein L2"/>
    <property type="match status" value="1"/>
</dbReference>
<dbReference type="Gene3D" id="2.30.30.30">
    <property type="match status" value="1"/>
</dbReference>
<dbReference type="Gene3D" id="2.40.50.140">
    <property type="entry name" value="Nucleic acid-binding proteins"/>
    <property type="match status" value="1"/>
</dbReference>
<dbReference type="Gene3D" id="4.10.950.10">
    <property type="entry name" value="Ribosomal protein L2, domain 3"/>
    <property type="match status" value="1"/>
</dbReference>
<dbReference type="HAMAP" id="MF_01320_B">
    <property type="entry name" value="Ribosomal_uL2_B"/>
    <property type="match status" value="1"/>
</dbReference>
<dbReference type="InterPro" id="IPR012340">
    <property type="entry name" value="NA-bd_OB-fold"/>
</dbReference>
<dbReference type="InterPro" id="IPR014722">
    <property type="entry name" value="Rib_uL2_dom2"/>
</dbReference>
<dbReference type="InterPro" id="IPR002171">
    <property type="entry name" value="Ribosomal_uL2"/>
</dbReference>
<dbReference type="InterPro" id="IPR005880">
    <property type="entry name" value="Ribosomal_uL2_bac/org-type"/>
</dbReference>
<dbReference type="InterPro" id="IPR022669">
    <property type="entry name" value="Ribosomal_uL2_C"/>
</dbReference>
<dbReference type="InterPro" id="IPR022671">
    <property type="entry name" value="Ribosomal_uL2_CS"/>
</dbReference>
<dbReference type="InterPro" id="IPR014726">
    <property type="entry name" value="Ribosomal_uL2_dom3"/>
</dbReference>
<dbReference type="InterPro" id="IPR022666">
    <property type="entry name" value="Ribosomal_uL2_RNA-bd_dom"/>
</dbReference>
<dbReference type="InterPro" id="IPR008991">
    <property type="entry name" value="Translation_prot_SH3-like_sf"/>
</dbReference>
<dbReference type="NCBIfam" id="TIGR01171">
    <property type="entry name" value="rplB_bact"/>
    <property type="match status" value="1"/>
</dbReference>
<dbReference type="PANTHER" id="PTHR13691:SF5">
    <property type="entry name" value="LARGE RIBOSOMAL SUBUNIT PROTEIN UL2M"/>
    <property type="match status" value="1"/>
</dbReference>
<dbReference type="PANTHER" id="PTHR13691">
    <property type="entry name" value="RIBOSOMAL PROTEIN L2"/>
    <property type="match status" value="1"/>
</dbReference>
<dbReference type="Pfam" id="PF00181">
    <property type="entry name" value="Ribosomal_L2"/>
    <property type="match status" value="1"/>
</dbReference>
<dbReference type="Pfam" id="PF03947">
    <property type="entry name" value="Ribosomal_L2_C"/>
    <property type="match status" value="1"/>
</dbReference>
<dbReference type="PIRSF" id="PIRSF002158">
    <property type="entry name" value="Ribosomal_L2"/>
    <property type="match status" value="1"/>
</dbReference>
<dbReference type="SMART" id="SM01383">
    <property type="entry name" value="Ribosomal_L2"/>
    <property type="match status" value="1"/>
</dbReference>
<dbReference type="SMART" id="SM01382">
    <property type="entry name" value="Ribosomal_L2_C"/>
    <property type="match status" value="1"/>
</dbReference>
<dbReference type="SUPFAM" id="SSF50249">
    <property type="entry name" value="Nucleic acid-binding proteins"/>
    <property type="match status" value="1"/>
</dbReference>
<dbReference type="SUPFAM" id="SSF50104">
    <property type="entry name" value="Translation proteins SH3-like domain"/>
    <property type="match status" value="1"/>
</dbReference>
<dbReference type="PROSITE" id="PS00467">
    <property type="entry name" value="RIBOSOMAL_L2"/>
    <property type="match status" value="1"/>
</dbReference>
<proteinExistence type="inferred from homology"/>
<name>RL2_STRPM</name>
<comment type="function">
    <text evidence="1">One of the primary rRNA binding proteins. Required for association of the 30S and 50S subunits to form the 70S ribosome, for tRNA binding and peptide bond formation. It has been suggested to have peptidyltransferase activity; this is somewhat controversial. Makes several contacts with the 16S rRNA in the 70S ribosome.</text>
</comment>
<comment type="subunit">
    <text evidence="1">Part of the 50S ribosomal subunit. Forms a bridge to the 30S subunit in the 70S ribosome.</text>
</comment>
<comment type="similarity">
    <text evidence="1">Belongs to the universal ribosomal protein uL2 family.</text>
</comment>
<evidence type="ECO:0000255" key="1">
    <source>
        <dbReference type="HAMAP-Rule" id="MF_01320"/>
    </source>
</evidence>
<evidence type="ECO:0000256" key="2">
    <source>
        <dbReference type="SAM" id="MobiDB-lite"/>
    </source>
</evidence>
<evidence type="ECO:0000305" key="3"/>
<accession>Q48VU6</accession>
<sequence length="277" mass="29876">MGIKVYKPTTNGRRNMTSLDFAEITTSTPEKSLLVSLKSKAGRNNNGRITVRHQGGGHKRHYRLIDFKRNKDGVEAVVKTIEYDPNRTANIALVHYTDGVKAYIIAPKGLEVGQRIVSGPDADIKVGNALPLANIPVGTVVHNIELKPGKGGELVRAAGASAQVLGQEGKYVLVRLQSGEVRMILGTCRATIGTVGNEQQSLVNIGKAGRSRWKGIRPTVRGSVMNPNDHPHGGGEGKAPVGRKAPSTPWGKPALGLKTRNKKAKSDKLIVRRRNEK</sequence>
<protein>
    <recommendedName>
        <fullName evidence="1">Large ribosomal subunit protein uL2</fullName>
    </recommendedName>
    <alternativeName>
        <fullName evidence="3">50S ribosomal protein L2</fullName>
    </alternativeName>
</protein>
<reference key="1">
    <citation type="journal article" date="2005" name="J. Infect. Dis.">
        <title>Genome sequence of a serotype M28 strain of group A Streptococcus: potential new insights into puerperal sepsis and bacterial disease specificity.</title>
        <authorList>
            <person name="Green N.M."/>
            <person name="Zhang S."/>
            <person name="Porcella S.F."/>
            <person name="Nagiec M.J."/>
            <person name="Barbian K.D."/>
            <person name="Beres S.B."/>
            <person name="Lefebvre R.B."/>
            <person name="Musser J.M."/>
        </authorList>
    </citation>
    <scope>NUCLEOTIDE SEQUENCE [LARGE SCALE GENOMIC DNA]</scope>
    <source>
        <strain>MGAS6180</strain>
    </source>
</reference>
<feature type="chain" id="PRO_0000237248" description="Large ribosomal subunit protein uL2">
    <location>
        <begin position="1"/>
        <end position="277"/>
    </location>
</feature>
<feature type="region of interest" description="Disordered" evidence="2">
    <location>
        <begin position="219"/>
        <end position="277"/>
    </location>
</feature>
<feature type="compositionally biased region" description="Basic and acidic residues" evidence="2">
    <location>
        <begin position="264"/>
        <end position="277"/>
    </location>
</feature>
<gene>
    <name evidence="1" type="primary">rplB</name>
    <name type="ordered locus">M28_Spy0046</name>
</gene>
<keyword id="KW-0687">Ribonucleoprotein</keyword>
<keyword id="KW-0689">Ribosomal protein</keyword>
<keyword id="KW-0694">RNA-binding</keyword>
<keyword id="KW-0699">rRNA-binding</keyword>